<proteinExistence type="inferred from homology"/>
<protein>
    <recommendedName>
        <fullName evidence="1">Small ribosomal subunit protein bS16</fullName>
    </recommendedName>
    <alternativeName>
        <fullName evidence="2">30S ribosomal protein S16</fullName>
    </alternativeName>
</protein>
<sequence length="82" mass="9286">MAVKIRLARCGRKKRPFYRMVVADERYARDGRFIEKVGTYNPLVNPAEVVVAKDRVEHWLGQGAQATRTVKSILKKEGVAVS</sequence>
<organism>
    <name type="scientific">Desulfosudis oleivorans (strain DSM 6200 / JCM 39069 / Hxd3)</name>
    <name type="common">Desulfococcus oleovorans</name>
    <dbReference type="NCBI Taxonomy" id="96561"/>
    <lineage>
        <taxon>Bacteria</taxon>
        <taxon>Pseudomonadati</taxon>
        <taxon>Thermodesulfobacteriota</taxon>
        <taxon>Desulfobacteria</taxon>
        <taxon>Desulfobacterales</taxon>
        <taxon>Desulfosudaceae</taxon>
        <taxon>Desulfosudis</taxon>
    </lineage>
</organism>
<reference key="1">
    <citation type="submission" date="2007-10" db="EMBL/GenBank/DDBJ databases">
        <title>Complete sequence of Desulfococcus oleovorans Hxd3.</title>
        <authorList>
            <consortium name="US DOE Joint Genome Institute"/>
            <person name="Copeland A."/>
            <person name="Lucas S."/>
            <person name="Lapidus A."/>
            <person name="Barry K."/>
            <person name="Glavina del Rio T."/>
            <person name="Dalin E."/>
            <person name="Tice H."/>
            <person name="Pitluck S."/>
            <person name="Kiss H."/>
            <person name="Brettin T."/>
            <person name="Bruce D."/>
            <person name="Detter J.C."/>
            <person name="Han C."/>
            <person name="Schmutz J."/>
            <person name="Larimer F."/>
            <person name="Land M."/>
            <person name="Hauser L."/>
            <person name="Kyrpides N."/>
            <person name="Kim E."/>
            <person name="Wawrik B."/>
            <person name="Richardson P."/>
        </authorList>
    </citation>
    <scope>NUCLEOTIDE SEQUENCE [LARGE SCALE GENOMIC DNA]</scope>
    <source>
        <strain>DSM 6200 / JCM 39069 / Hxd3</strain>
    </source>
</reference>
<dbReference type="EMBL" id="CP000859">
    <property type="protein sequence ID" value="ABW68113.1"/>
    <property type="molecule type" value="Genomic_DNA"/>
</dbReference>
<dbReference type="RefSeq" id="WP_012175725.1">
    <property type="nucleotide sequence ID" value="NC_009943.1"/>
</dbReference>
<dbReference type="SMR" id="A8ZV23"/>
<dbReference type="STRING" id="96561.Dole_2309"/>
<dbReference type="KEGG" id="dol:Dole_2309"/>
<dbReference type="eggNOG" id="COG0228">
    <property type="taxonomic scope" value="Bacteria"/>
</dbReference>
<dbReference type="HOGENOM" id="CLU_100590_5_0_7"/>
<dbReference type="OrthoDB" id="9807878at2"/>
<dbReference type="Proteomes" id="UP000008561">
    <property type="component" value="Chromosome"/>
</dbReference>
<dbReference type="GO" id="GO:0005737">
    <property type="term" value="C:cytoplasm"/>
    <property type="evidence" value="ECO:0007669"/>
    <property type="project" value="UniProtKB-ARBA"/>
</dbReference>
<dbReference type="GO" id="GO:0015935">
    <property type="term" value="C:small ribosomal subunit"/>
    <property type="evidence" value="ECO:0007669"/>
    <property type="project" value="TreeGrafter"/>
</dbReference>
<dbReference type="GO" id="GO:0003735">
    <property type="term" value="F:structural constituent of ribosome"/>
    <property type="evidence" value="ECO:0007669"/>
    <property type="project" value="InterPro"/>
</dbReference>
<dbReference type="GO" id="GO:0006412">
    <property type="term" value="P:translation"/>
    <property type="evidence" value="ECO:0007669"/>
    <property type="project" value="UniProtKB-UniRule"/>
</dbReference>
<dbReference type="Gene3D" id="3.30.1320.10">
    <property type="match status" value="1"/>
</dbReference>
<dbReference type="HAMAP" id="MF_00385">
    <property type="entry name" value="Ribosomal_bS16"/>
    <property type="match status" value="1"/>
</dbReference>
<dbReference type="InterPro" id="IPR000307">
    <property type="entry name" value="Ribosomal_bS16"/>
</dbReference>
<dbReference type="InterPro" id="IPR020592">
    <property type="entry name" value="Ribosomal_bS16_CS"/>
</dbReference>
<dbReference type="InterPro" id="IPR023803">
    <property type="entry name" value="Ribosomal_bS16_dom_sf"/>
</dbReference>
<dbReference type="NCBIfam" id="TIGR00002">
    <property type="entry name" value="S16"/>
    <property type="match status" value="1"/>
</dbReference>
<dbReference type="PANTHER" id="PTHR12919">
    <property type="entry name" value="30S RIBOSOMAL PROTEIN S16"/>
    <property type="match status" value="1"/>
</dbReference>
<dbReference type="PANTHER" id="PTHR12919:SF20">
    <property type="entry name" value="SMALL RIBOSOMAL SUBUNIT PROTEIN BS16M"/>
    <property type="match status" value="1"/>
</dbReference>
<dbReference type="Pfam" id="PF00886">
    <property type="entry name" value="Ribosomal_S16"/>
    <property type="match status" value="1"/>
</dbReference>
<dbReference type="SUPFAM" id="SSF54565">
    <property type="entry name" value="Ribosomal protein S16"/>
    <property type="match status" value="1"/>
</dbReference>
<dbReference type="PROSITE" id="PS00732">
    <property type="entry name" value="RIBOSOMAL_S16"/>
    <property type="match status" value="1"/>
</dbReference>
<keyword id="KW-1185">Reference proteome</keyword>
<keyword id="KW-0687">Ribonucleoprotein</keyword>
<keyword id="KW-0689">Ribosomal protein</keyword>
<gene>
    <name evidence="1" type="primary">rpsP</name>
    <name type="ordered locus">Dole_2309</name>
</gene>
<comment type="similarity">
    <text evidence="1">Belongs to the bacterial ribosomal protein bS16 family.</text>
</comment>
<feature type="chain" id="PRO_1000196386" description="Small ribosomal subunit protein bS16">
    <location>
        <begin position="1"/>
        <end position="82"/>
    </location>
</feature>
<name>RS16_DESOH</name>
<evidence type="ECO:0000255" key="1">
    <source>
        <dbReference type="HAMAP-Rule" id="MF_00385"/>
    </source>
</evidence>
<evidence type="ECO:0000305" key="2"/>
<accession>A8ZV23</accession>